<comment type="function">
    <text evidence="2">Calcium-binding protein that interacts with rotavirus cell receptors once the initial attachment by VP4 has been achieved. Rotavirus attachment and entry into the host cell probably involves multiple sequential contacts between the outer capsid proteins VP4 and VP7, and the cell receptors. Following entry into the host cell, low intracellular or intravesicular Ca(2+) concentration probably causes the calcium-stabilized VP7 trimers to dissociate from the virion. This step is probably necessary for the membrane-disrupting entry step and the release of VP4, which is locked onto the virion by VP7.</text>
</comment>
<comment type="subunit">
    <text evidence="2">Homotrimer; disulfide-linked. 2 Ca(2+) ions bound at each subunit interface in the trimer hold the trimer together. Interacts with the intermediate capsid protein VP6. Interacts with the outer capsid protein VP5*.</text>
</comment>
<comment type="subcellular location">
    <subcellularLocation>
        <location evidence="2">Virion</location>
    </subcellularLocation>
    <subcellularLocation>
        <location evidence="2">Host endoplasmic reticulum lumen</location>
    </subcellularLocation>
    <text evidence="2">The outer layer contains 780 copies of VP7, grouped as 260 trimers. Immature double-layered particles assembled in the cytoplasm bud across the membrane of the endoplasmic reticulum, acquiring during this process a transient lipid membrane that is modified with the ER resident viral glycoproteins NSP4 and VP7; these enveloped particles also contain VP4. As the particles move towards the interior of the ER cisternae, the transient lipid membrane and the non-structural protein NSP4 are lost, while the virus surface proteins VP4 and VP7 rearrange to form the outermost virus protein layer, yielding mature infectious triple-layered particles.</text>
</comment>
<comment type="alternative products">
    <event type="alternative initiation"/>
    <isoform>
        <id>P25187-1</id>
        <name>1</name>
        <sequence type="displayed"/>
    </isoform>
    <isoform>
        <id>P25187-2</id>
        <name>2</name>
        <sequence type="described" ref="VSP_038616"/>
    </isoform>
</comment>
<comment type="PTM">
    <text evidence="2">N-glycosylated.</text>
</comment>
<comment type="PTM">
    <text evidence="2">The N-terminus is blocked possibly by pyroglutamic acid.</text>
</comment>
<comment type="miscellaneous">
    <text evidence="2">Some rotavirus strains are neuraminidase-sensitive and require sialic acid to attach to the cell surface. Some rotavirus strains are integrin-dependent. Some rotavirus strains depend on ganglioside for their entry into the host cell. Hsp70 also seems to be involved in the entry of some strains.</text>
</comment>
<comment type="miscellaneous">
    <text evidence="2">In group A rotaviruses, VP7 defines the G serotype.</text>
</comment>
<comment type="miscellaneous">
    <molecule>Isoform 2</molecule>
    <text evidence="3">Produced by alternative initiation at Met-30 of isoform 1.</text>
</comment>
<comment type="similarity">
    <text evidence="2">Belongs to the rotavirus VP7 family.</text>
</comment>
<protein>
    <recommendedName>
        <fullName evidence="2">Outer capsid glycoprotein VP7</fullName>
    </recommendedName>
</protein>
<keyword id="KW-0024">Alternative initiation</keyword>
<keyword id="KW-0106">Calcium</keyword>
<keyword id="KW-0167">Capsid protein</keyword>
<keyword id="KW-1015">Disulfide bond</keyword>
<keyword id="KW-0325">Glycoprotein</keyword>
<keyword id="KW-1038">Host endoplasmic reticulum</keyword>
<keyword id="KW-0945">Host-virus interaction</keyword>
<keyword id="KW-0479">Metal-binding</keyword>
<keyword id="KW-1152">Outer capsid protein</keyword>
<keyword id="KW-0732">Signal</keyword>
<keyword id="KW-1146">T=13 icosahedral capsid protein</keyword>
<keyword id="KW-0946">Virion</keyword>
<dbReference type="EMBL" id="M64666">
    <property type="protein sequence ID" value="AAA47343.1"/>
    <property type="molecule type" value="Genomic_RNA"/>
</dbReference>
<dbReference type="SMR" id="P25187"/>
<dbReference type="GO" id="GO:0044166">
    <property type="term" value="C:host cell endoplasmic reticulum lumen"/>
    <property type="evidence" value="ECO:0007669"/>
    <property type="project" value="UniProtKB-SubCell"/>
</dbReference>
<dbReference type="GO" id="GO:0039621">
    <property type="term" value="C:T=13 icosahedral viral capsid"/>
    <property type="evidence" value="ECO:0007669"/>
    <property type="project" value="UniProtKB-UniRule"/>
</dbReference>
<dbReference type="GO" id="GO:0039624">
    <property type="term" value="C:viral outer capsid"/>
    <property type="evidence" value="ECO:0007669"/>
    <property type="project" value="UniProtKB-UniRule"/>
</dbReference>
<dbReference type="GO" id="GO:0046872">
    <property type="term" value="F:metal ion binding"/>
    <property type="evidence" value="ECO:0007669"/>
    <property type="project" value="UniProtKB-KW"/>
</dbReference>
<dbReference type="Gene3D" id="3.40.50.11130">
    <property type="entry name" value="Glycoprotein VP7, domain 1"/>
    <property type="match status" value="1"/>
</dbReference>
<dbReference type="Gene3D" id="2.60.120.800">
    <property type="entry name" value="Rotavirus outer-layer protein VP7, domain 2"/>
    <property type="match status" value="1"/>
</dbReference>
<dbReference type="HAMAP" id="MF_04130">
    <property type="entry name" value="Rota_VP7"/>
    <property type="match status" value="1"/>
</dbReference>
<dbReference type="HAMAP" id="MF_04131">
    <property type="entry name" value="Rota_VP7_A"/>
    <property type="match status" value="1"/>
</dbReference>
<dbReference type="InterPro" id="IPR001963">
    <property type="entry name" value="VP7"/>
</dbReference>
<dbReference type="InterPro" id="IPR042207">
    <property type="entry name" value="VP7_1"/>
</dbReference>
<dbReference type="InterPro" id="IPR042210">
    <property type="entry name" value="VP7_2"/>
</dbReference>
<dbReference type="Pfam" id="PF00434">
    <property type="entry name" value="VP7"/>
    <property type="match status" value="1"/>
</dbReference>
<evidence type="ECO:0000255" key="1"/>
<evidence type="ECO:0000255" key="2">
    <source>
        <dbReference type="HAMAP-Rule" id="MF_04131"/>
    </source>
</evidence>
<evidence type="ECO:0000305" key="3"/>
<sequence>MYGIEYTTILIFLISIILLNYIVKSVTRIMDYIIYRFLLISVALFALTRAQNYGINLPITGSMDIVYANSTQEEIFLTSTLCLYYPTEASTQINDGEWKDSLSQMFLTKGWPTGSVYFKEYSSIVDFSVDPQLYCDYNLVLMKYDQNLELDMSELADLILNEWLCNPMDITLYYYQQSGESNKWISMGSSCTVKVCPLNTQTLGIGCQTTNVDSFEMVAENEKLAIVDVVDGINHKINLTTTTCTNRNCKKLGPRENVAVIQVGGSNVLDITADPTTNPQTERMMRVNWKKWWQVFYTIVDYINQIVQVMSKRSRSLNSAAFYYRV</sequence>
<accession>P25187</accession>
<organism>
    <name type="scientific">Rotavirus A (strain RVA/Human/Australia/RV-4/1977/G1P1A[8])</name>
    <name type="common">RV-A</name>
    <name type="synonym">Rotavirus A (strain RV4)</name>
    <dbReference type="NCBI Taxonomy" id="31570"/>
    <lineage>
        <taxon>Viruses</taxon>
        <taxon>Riboviria</taxon>
        <taxon>Orthornavirae</taxon>
        <taxon>Duplornaviricota</taxon>
        <taxon>Resentoviricetes</taxon>
        <taxon>Reovirales</taxon>
        <taxon>Sedoreoviridae</taxon>
        <taxon>Rotavirus</taxon>
        <taxon>Rotavirus A</taxon>
    </lineage>
</organism>
<name>VP7_ROTH4</name>
<proteinExistence type="inferred from homology"/>
<organismHost>
    <name type="scientific">Homo sapiens</name>
    <name type="common">Human</name>
    <dbReference type="NCBI Taxonomy" id="9606"/>
</organismHost>
<feature type="signal peptide" evidence="2">
    <location>
        <begin position="1"/>
        <end position="50"/>
    </location>
</feature>
<feature type="chain" id="PRO_0000149593" description="Outer capsid glycoprotein VP7" evidence="2">
    <location>
        <begin position="51"/>
        <end position="326"/>
    </location>
</feature>
<feature type="region of interest" description="CNP motif; interaction with ITGAV/ITGB3" evidence="2">
    <location>
        <begin position="165"/>
        <end position="167"/>
    </location>
</feature>
<feature type="region of interest" description="GPR motif; interaction with ITGAX/ITGB2" evidence="2">
    <location>
        <begin position="253"/>
        <end position="255"/>
    </location>
</feature>
<feature type="binding site" evidence="2">
    <location>
        <position position="95"/>
    </location>
    <ligand>
        <name>Ca(2+)</name>
        <dbReference type="ChEBI" id="CHEBI:29108"/>
        <label>1</label>
    </ligand>
</feature>
<feature type="binding site" evidence="2">
    <location>
        <position position="177"/>
    </location>
    <ligand>
        <name>Ca(2+)</name>
        <dbReference type="ChEBI" id="CHEBI:29108"/>
        <label>2</label>
    </ligand>
</feature>
<feature type="binding site" evidence="2">
    <location>
        <position position="206"/>
    </location>
    <ligand>
        <name>Ca(2+)</name>
        <dbReference type="ChEBI" id="CHEBI:29108"/>
        <label>1</label>
    </ligand>
</feature>
<feature type="binding site" evidence="2">
    <location>
        <position position="214"/>
    </location>
    <ligand>
        <name>Ca(2+)</name>
        <dbReference type="ChEBI" id="CHEBI:29108"/>
        <label>1</label>
    </ligand>
</feature>
<feature type="binding site" evidence="2">
    <location>
        <position position="216"/>
    </location>
    <ligand>
        <name>Ca(2+)</name>
        <dbReference type="ChEBI" id="CHEBI:29108"/>
        <label>1</label>
    </ligand>
</feature>
<feature type="binding site" evidence="2">
    <location>
        <position position="228"/>
    </location>
    <ligand>
        <name>Ca(2+)</name>
        <dbReference type="ChEBI" id="CHEBI:29108"/>
        <label>2</label>
    </ligand>
</feature>
<feature type="binding site" evidence="2">
    <location>
        <position position="229"/>
    </location>
    <ligand>
        <name>Ca(2+)</name>
        <dbReference type="ChEBI" id="CHEBI:29108"/>
        <label>2</label>
    </ligand>
</feature>
<feature type="binding site" evidence="2">
    <location>
        <position position="231"/>
    </location>
    <ligand>
        <name>Ca(2+)</name>
        <dbReference type="ChEBI" id="CHEBI:29108"/>
        <label>2</label>
    </ligand>
</feature>
<feature type="binding site" evidence="2">
    <location>
        <position position="301"/>
    </location>
    <ligand>
        <name>Ca(2+)</name>
        <dbReference type="ChEBI" id="CHEBI:29108"/>
        <label>2</label>
    </ligand>
</feature>
<feature type="glycosylation site" description="N-linked (GlcNAc...) asparagine; by host" evidence="1">
    <location>
        <position position="69"/>
    </location>
</feature>
<feature type="glycosylation site" description="N-linked (GlcNAc...) asparagine; by host" evidence="1">
    <location>
        <position position="238"/>
    </location>
</feature>
<feature type="disulfide bond" evidence="2">
    <location>
        <begin position="82"/>
        <end position="135"/>
    </location>
</feature>
<feature type="disulfide bond" evidence="2">
    <location>
        <begin position="165"/>
        <end position="249"/>
    </location>
</feature>
<feature type="disulfide bond" evidence="2">
    <location>
        <begin position="191"/>
        <end position="244"/>
    </location>
</feature>
<feature type="disulfide bond" evidence="2">
    <location>
        <begin position="196"/>
        <end position="207"/>
    </location>
</feature>
<feature type="splice variant" id="VSP_038616" description="In isoform 2." evidence="3">
    <location>
        <begin position="1"/>
        <end position="29"/>
    </location>
</feature>
<reference key="1">
    <citation type="journal article" date="1991" name="J. Virol.">
        <title>Relation of VP7 amino acid sequence to monoclonal antibody neutralization of rotavirus and rotavirus monotype.</title>
        <authorList>
            <person name="Coulson B.S."/>
            <person name="Kirkwood C.D."/>
        </authorList>
    </citation>
    <scope>NUCLEOTIDE SEQUENCE [GENOMIC RNA]</scope>
</reference>